<protein>
    <recommendedName>
        <fullName>Methionine aminopeptidase</fullName>
        <shortName>MAP</shortName>
        <shortName>MetAP</shortName>
        <ecNumber>3.4.11.18</ecNumber>
    </recommendedName>
    <alternativeName>
        <fullName>Peptidase M</fullName>
    </alternativeName>
</protein>
<sequence>MEKFKKAGKIASKVRKKAIKAVKGEMKILDLAEFIENEIEKMGAKPAFPCNISVNEITAHYSPPCNDDRKILPGDLVKIDIGVHVDGFIGDTATTVLVEGYEDLKNYNDELAEKNKKMIEAAESALENAINTIRDGVEIGKIGEVIENTINKFGFKPISNLTGHTIDRWVLHSGLSIPNVKGQNSHKL</sequence>
<feature type="chain" id="PRO_0000148974" description="Methionine aminopeptidase">
    <location>
        <begin position="1"/>
        <end position="188" status="greater than"/>
    </location>
</feature>
<feature type="binding site" evidence="1">
    <location>
        <position position="60"/>
    </location>
    <ligand>
        <name>substrate</name>
    </ligand>
</feature>
<feature type="binding site" evidence="1">
    <location>
        <position position="80"/>
    </location>
    <ligand>
        <name>a divalent metal cation</name>
        <dbReference type="ChEBI" id="CHEBI:60240"/>
        <label>1</label>
    </ligand>
</feature>
<feature type="binding site" evidence="1">
    <location>
        <position position="91"/>
    </location>
    <ligand>
        <name>a divalent metal cation</name>
        <dbReference type="ChEBI" id="CHEBI:60240"/>
        <label>1</label>
    </ligand>
</feature>
<feature type="binding site" evidence="1">
    <location>
        <position position="91"/>
    </location>
    <ligand>
        <name>a divalent metal cation</name>
        <dbReference type="ChEBI" id="CHEBI:60240"/>
        <label>2</label>
        <note>catalytic</note>
    </ligand>
</feature>
<feature type="binding site" evidence="1">
    <location>
        <position position="164"/>
    </location>
    <ligand>
        <name>a divalent metal cation</name>
        <dbReference type="ChEBI" id="CHEBI:60240"/>
        <label>2</label>
        <note>catalytic</note>
    </ligand>
</feature>
<feature type="binding site" evidence="1">
    <location>
        <position position="172"/>
    </location>
    <ligand>
        <name>substrate</name>
    </ligand>
</feature>
<feature type="non-terminal residue">
    <location>
        <position position="188"/>
    </location>
</feature>
<dbReference type="EC" id="3.4.11.18"/>
<dbReference type="EMBL" id="M26978">
    <property type="protein sequence ID" value="AAA72775.1"/>
    <property type="molecule type" value="Genomic_DNA"/>
</dbReference>
<dbReference type="PIR" id="PS0039">
    <property type="entry name" value="PS0039"/>
</dbReference>
<dbReference type="SMR" id="P22624"/>
<dbReference type="MEROPS" id="M24.035"/>
<dbReference type="GO" id="GO:0005737">
    <property type="term" value="C:cytoplasm"/>
    <property type="evidence" value="ECO:0007669"/>
    <property type="project" value="TreeGrafter"/>
</dbReference>
<dbReference type="GO" id="GO:0004239">
    <property type="term" value="F:initiator methionyl aminopeptidase activity"/>
    <property type="evidence" value="ECO:0007669"/>
    <property type="project" value="UniProtKB-EC"/>
</dbReference>
<dbReference type="GO" id="GO:0046872">
    <property type="term" value="F:metal ion binding"/>
    <property type="evidence" value="ECO:0007669"/>
    <property type="project" value="UniProtKB-KW"/>
</dbReference>
<dbReference type="GO" id="GO:0008235">
    <property type="term" value="F:metalloexopeptidase activity"/>
    <property type="evidence" value="ECO:0007669"/>
    <property type="project" value="TreeGrafter"/>
</dbReference>
<dbReference type="GO" id="GO:0006508">
    <property type="term" value="P:proteolysis"/>
    <property type="evidence" value="ECO:0007669"/>
    <property type="project" value="UniProtKB-KW"/>
</dbReference>
<dbReference type="Gene3D" id="3.90.230.10">
    <property type="entry name" value="Creatinase/methionine aminopeptidase superfamily"/>
    <property type="match status" value="1"/>
</dbReference>
<dbReference type="InterPro" id="IPR036005">
    <property type="entry name" value="Creatinase/aminopeptidase-like"/>
</dbReference>
<dbReference type="InterPro" id="IPR050247">
    <property type="entry name" value="Met_Aminopeptidase_Type2"/>
</dbReference>
<dbReference type="InterPro" id="IPR000994">
    <property type="entry name" value="Pept_M24"/>
</dbReference>
<dbReference type="InterPro" id="IPR001714">
    <property type="entry name" value="Pept_M24_MAP"/>
</dbReference>
<dbReference type="InterPro" id="IPR018349">
    <property type="entry name" value="Pept_M24A_MAP2_BS"/>
</dbReference>
<dbReference type="PANTHER" id="PTHR45777">
    <property type="entry name" value="METHIONINE AMINOPEPTIDASE 2"/>
    <property type="match status" value="1"/>
</dbReference>
<dbReference type="PANTHER" id="PTHR45777:SF2">
    <property type="entry name" value="METHIONINE AMINOPEPTIDASE 2"/>
    <property type="match status" value="1"/>
</dbReference>
<dbReference type="Pfam" id="PF00557">
    <property type="entry name" value="Peptidase_M24"/>
    <property type="match status" value="1"/>
</dbReference>
<dbReference type="PRINTS" id="PR00599">
    <property type="entry name" value="MAPEPTIDASE"/>
</dbReference>
<dbReference type="SUPFAM" id="SSF55920">
    <property type="entry name" value="Creatinase/aminopeptidase"/>
    <property type="match status" value="1"/>
</dbReference>
<dbReference type="PROSITE" id="PS01202">
    <property type="entry name" value="MAP_2"/>
    <property type="match status" value="1"/>
</dbReference>
<proteinExistence type="inferred from homology"/>
<gene>
    <name type="primary">map</name>
</gene>
<accession>P22624</accession>
<evidence type="ECO:0000250" key="1"/>
<evidence type="ECO:0000305" key="2"/>
<comment type="function">
    <text evidence="1">Removes the N-terminal methionine from nascent proteins. The N-terminal methionine is often cleaved when the second residue in the primary sequence is small and uncharged (Met-Ala-, Cys, Gly, Pro, Ser, Thr, or Val) (By similarity).</text>
</comment>
<comment type="catalytic activity">
    <reaction>
        <text>Release of N-terminal amino acids, preferentially methionine, from peptides and arylamides.</text>
        <dbReference type="EC" id="3.4.11.18"/>
    </reaction>
</comment>
<comment type="cofactor">
    <cofactor evidence="1">
        <name>Co(2+)</name>
        <dbReference type="ChEBI" id="CHEBI:48828"/>
    </cofactor>
    <cofactor evidence="1">
        <name>Zn(2+)</name>
        <dbReference type="ChEBI" id="CHEBI:29105"/>
    </cofactor>
    <cofactor evidence="1">
        <name>Mn(2+)</name>
        <dbReference type="ChEBI" id="CHEBI:29035"/>
    </cofactor>
    <cofactor evidence="1">
        <name>Fe(2+)</name>
        <dbReference type="ChEBI" id="CHEBI:29033"/>
    </cofactor>
    <text evidence="1">Binds 2 divalent metal cations per subunit. Has a high-affinity and a low affinity metal-binding site. The true nature of the physiological cofactor is under debate. The enzyme is active with cobalt, zinc, manganese or divalent iron ions. Most likely, methionine aminopeptidases function as mononuclear Fe(2+)-metalloproteases under physiological conditions, and the catalytically relevant metal-binding site has been assigned to the histidine-containing high-affinity site.</text>
</comment>
<comment type="subunit">
    <text evidence="1">Monomer.</text>
</comment>
<comment type="similarity">
    <text evidence="2">Belongs to the peptidase M24A family. Methionine aminopeptidase archaeal type 2 subfamily.</text>
</comment>
<organism>
    <name type="scientific">Methanothermus fervidus</name>
    <dbReference type="NCBI Taxonomy" id="2180"/>
    <lineage>
        <taxon>Archaea</taxon>
        <taxon>Methanobacteriati</taxon>
        <taxon>Methanobacteriota</taxon>
        <taxon>Methanomada group</taxon>
        <taxon>Methanobacteria</taxon>
        <taxon>Methanobacteriales</taxon>
        <taxon>Methanothermaceae</taxon>
        <taxon>Methanothermus</taxon>
    </lineage>
</organism>
<keyword id="KW-0031">Aminopeptidase</keyword>
<keyword id="KW-0378">Hydrolase</keyword>
<keyword id="KW-0479">Metal-binding</keyword>
<keyword id="KW-0645">Protease</keyword>
<name>MAP2_METFE</name>
<reference key="1">
    <citation type="journal article" date="1989" name="Gene">
        <title>Genes encoding 5S rRNA and tRNAs in the extremely thermophilic archaebacterium Methanothermus fervidus.</title>
        <authorList>
            <person name="Haas E.S."/>
            <person name="Daniels C.J."/>
            <person name="Reeve J.N."/>
        </authorList>
    </citation>
    <scope>NUCLEOTIDE SEQUENCE [GENOMIC DNA]</scope>
</reference>
<reference key="2">
    <citation type="journal article" date="1995" name="Nucleic Acids Res.">
        <title>Novel protein families in archaean genomes.</title>
        <authorList>
            <person name="Ouzounis C."/>
            <person name="Kyrpides N."/>
            <person name="Sander C."/>
        </authorList>
    </citation>
    <scope>SIMILARITY</scope>
</reference>